<reference key="1">
    <citation type="journal article" date="2005" name="J. Bacteriol.">
        <title>Insights on evolution of virulence and resistance from the complete genome analysis of an early methicillin-resistant Staphylococcus aureus strain and a biofilm-producing methicillin-resistant Staphylococcus epidermidis strain.</title>
        <authorList>
            <person name="Gill S.R."/>
            <person name="Fouts D.E."/>
            <person name="Archer G.L."/>
            <person name="Mongodin E.F."/>
            <person name="DeBoy R.T."/>
            <person name="Ravel J."/>
            <person name="Paulsen I.T."/>
            <person name="Kolonay J.F."/>
            <person name="Brinkac L.M."/>
            <person name="Beanan M.J."/>
            <person name="Dodson R.J."/>
            <person name="Daugherty S.C."/>
            <person name="Madupu R."/>
            <person name="Angiuoli S.V."/>
            <person name="Durkin A.S."/>
            <person name="Haft D.H."/>
            <person name="Vamathevan J.J."/>
            <person name="Khouri H."/>
            <person name="Utterback T.R."/>
            <person name="Lee C."/>
            <person name="Dimitrov G."/>
            <person name="Jiang L."/>
            <person name="Qin H."/>
            <person name="Weidman J."/>
            <person name="Tran K."/>
            <person name="Kang K.H."/>
            <person name="Hance I.R."/>
            <person name="Nelson K.E."/>
            <person name="Fraser C.M."/>
        </authorList>
    </citation>
    <scope>NUCLEOTIDE SEQUENCE [LARGE SCALE GENOMIC DNA]</scope>
    <source>
        <strain>COL</strain>
    </source>
</reference>
<reference key="2">
    <citation type="journal article" date="2000" name="FEMS Microbiol. Lett.">
        <title>Identification of a fmtA-like gene that has similarity to other PBPs and beta-lactamases in Staphylococcus aureus.</title>
        <authorList>
            <person name="Komatsuzawa H."/>
            <person name="Choi G.H."/>
            <person name="Fujiwara T."/>
            <person name="Huang Y."/>
            <person name="Ohta K."/>
            <person name="Sugai M."/>
            <person name="Suginaka H."/>
        </authorList>
    </citation>
    <scope>FUNCTION</scope>
</reference>
<comment type="function">
    <text evidence="2">Its precise function is unknown. Has no penicillin-binding activity and is not involved in methicillin resistance.</text>
</comment>
<comment type="subcellular location">
    <subcellularLocation>
        <location evidence="3">Cell membrane</location>
        <topology evidence="3">Multi-pass membrane protein</topology>
    </subcellularLocation>
</comment>
<comment type="miscellaneous">
    <text>Has two of three conserved motifs typically found in penicillin-binding proteins (PBPs) and beta-lactamases, but no penicillin-binding activity has been detected.</text>
</comment>
<proteinExistence type="predicted"/>
<protein>
    <recommendedName>
        <fullName>Protein flp</fullName>
    </recommendedName>
    <alternativeName>
        <fullName>FmtA-like protein</fullName>
    </alternativeName>
</protein>
<organism>
    <name type="scientific">Staphylococcus aureus (strain COL)</name>
    <dbReference type="NCBI Taxonomy" id="93062"/>
    <lineage>
        <taxon>Bacteria</taxon>
        <taxon>Bacillati</taxon>
        <taxon>Bacillota</taxon>
        <taxon>Bacilli</taxon>
        <taxon>Bacillales</taxon>
        <taxon>Staphylococcaceae</taxon>
        <taxon>Staphylococcus</taxon>
    </lineage>
</organism>
<keyword id="KW-1003">Cell membrane</keyword>
<keyword id="KW-0472">Membrane</keyword>
<keyword id="KW-0812">Transmembrane</keyword>
<keyword id="KW-1133">Transmembrane helix</keyword>
<name>FLP_STAAC</name>
<sequence>MTTKKLYFLSISIIIIVAISIAIYITLNSNTKTRLTNDSQQQIDTIIEHDLQKGHIPGASILIVKNGKVFLNKGYGYQDVDKKVKASPTTKYEIASNTKAFTGLAILKLAQEGRLNLNDAVSKHVPHFKMNYNGQNETITIKQLLAQTSGIPSDITSEDSVTSKNNRLNDVTRAIMGDELHHKPGEEFEYSNMNYDLLGLIIQNVTKQSYTKYITNSWLKPLHMTHTSFKQTNYKSKHDAIGYELQGSTPVVSKPEFNLWDTPSAYMMTSTEDLEHWIKFQLNPPDKYKSLVQQSHKNLSSTIGEPNANAYASGWFTNNDEHLVFHSGTLDNFSSFILLNPKQNYGIVVLANLNSEYVPKLVEHLNTQIVNHKRYSTVASMLNQYKDQFNIVTVLMTTLILLAFIFSAYRAWQMRHGQILLRRSKRIAVLSWLSLCICIALALILYALPYLILGSNNWSFVLTWLPIEIKLALITTLIALFSTLIVILLFLHTKITKT</sequence>
<evidence type="ECO:0000255" key="1"/>
<evidence type="ECO:0000269" key="2">
    <source>
    </source>
</evidence>
<evidence type="ECO:0000305" key="3"/>
<feature type="chain" id="PRO_0000087304" description="Protein flp">
    <location>
        <begin position="1"/>
        <end position="498"/>
    </location>
</feature>
<feature type="transmembrane region" description="Helical" evidence="1">
    <location>
        <begin position="6"/>
        <end position="26"/>
    </location>
</feature>
<feature type="transmembrane region" description="Helical" evidence="1">
    <location>
        <begin position="389"/>
        <end position="409"/>
    </location>
</feature>
<feature type="transmembrane region" description="Helical" evidence="1">
    <location>
        <begin position="433"/>
        <end position="453"/>
    </location>
</feature>
<feature type="transmembrane region" description="Helical" evidence="1">
    <location>
        <begin position="471"/>
        <end position="491"/>
    </location>
</feature>
<gene>
    <name type="primary">flp</name>
    <name type="ordered locus">SACOL2445</name>
</gene>
<dbReference type="EMBL" id="CP000046">
    <property type="protein sequence ID" value="AAW38536.1"/>
    <property type="molecule type" value="Genomic_DNA"/>
</dbReference>
<dbReference type="RefSeq" id="WP_000208554.1">
    <property type="nucleotide sequence ID" value="NC_002951.2"/>
</dbReference>
<dbReference type="SMR" id="Q5HDB2"/>
<dbReference type="MEROPS" id="S12.011"/>
<dbReference type="KEGG" id="sac:SACOL2445"/>
<dbReference type="HOGENOM" id="CLU_020027_4_2_9"/>
<dbReference type="Proteomes" id="UP000000530">
    <property type="component" value="Chromosome"/>
</dbReference>
<dbReference type="GO" id="GO:0005886">
    <property type="term" value="C:plasma membrane"/>
    <property type="evidence" value="ECO:0007669"/>
    <property type="project" value="UniProtKB-SubCell"/>
</dbReference>
<dbReference type="Gene3D" id="3.40.710.10">
    <property type="entry name" value="DD-peptidase/beta-lactamase superfamily"/>
    <property type="match status" value="1"/>
</dbReference>
<dbReference type="InterPro" id="IPR050491">
    <property type="entry name" value="Bact_CellWall_Synth/Modif"/>
</dbReference>
<dbReference type="InterPro" id="IPR001466">
    <property type="entry name" value="Beta-lactam-related"/>
</dbReference>
<dbReference type="InterPro" id="IPR012338">
    <property type="entry name" value="Beta-lactam/transpept-like"/>
</dbReference>
<dbReference type="PANTHER" id="PTHR46825">
    <property type="entry name" value="D-ALANYL-D-ALANINE-CARBOXYPEPTIDASE/ENDOPEPTIDASE AMPH"/>
    <property type="match status" value="1"/>
</dbReference>
<dbReference type="PANTHER" id="PTHR46825:SF11">
    <property type="entry name" value="PENICILLIN-BINDING PROTEIN 4"/>
    <property type="match status" value="1"/>
</dbReference>
<dbReference type="Pfam" id="PF00144">
    <property type="entry name" value="Beta-lactamase"/>
    <property type="match status" value="1"/>
</dbReference>
<dbReference type="SUPFAM" id="SSF56601">
    <property type="entry name" value="beta-lactamase/transpeptidase-like"/>
    <property type="match status" value="1"/>
</dbReference>
<accession>Q5HDB2</accession>